<feature type="chain" id="PRO_0000258905" description="Anaerobic glycerol-3-phosphate dehydrogenase subunit B">
    <location>
        <begin position="1"/>
        <end position="419"/>
    </location>
</feature>
<sequence>MKFDTVIMGGGLAGLLCGLQLQQHGLRCAIVTRGQSALHFSSGSLDLLSALPDGQPVTDITAGLDALCRQAPEHPYSRLGAQKVLTLAQQAQTLLNASGAQLYGDVQQAHQRVTPLGTLRSTWLSSPEVPVWPLSAQRICVVGVSGLLDFQAHLAAASLRQRDLNVETAEIDLPELDVLRDNPTEFRAVNIARLLDNEEKWPLLYDALSPIATNCDMIIMPACFGLANDTLWRWLNERLPCALTLLPTLPPSVLGIRLHNQLQRQFVRQGGIWMPGDEVKKVTCRHGIVSEIWTRNHADIPLRPRFAVLASGSFFSSGLVAEREGIREPILGLDVQQTATRAEWYQQHFFDPQPWQQFGVVTDDAFRPSLAGNTVENLYAIGSVLAGFDPIAEGCGGGVCAVSALQAAHHIAERAGEQQ</sequence>
<comment type="function">
    <text evidence="1">Conversion of glycerol 3-phosphate to dihydroxyacetone. Uses fumarate or nitrate as electron acceptor.</text>
</comment>
<comment type="catalytic activity">
    <reaction evidence="1">
        <text>a quinone + sn-glycerol 3-phosphate = dihydroxyacetone phosphate + a quinol</text>
        <dbReference type="Rhea" id="RHEA:18977"/>
        <dbReference type="ChEBI" id="CHEBI:24646"/>
        <dbReference type="ChEBI" id="CHEBI:57597"/>
        <dbReference type="ChEBI" id="CHEBI:57642"/>
        <dbReference type="ChEBI" id="CHEBI:132124"/>
        <dbReference type="EC" id="1.1.5.3"/>
    </reaction>
</comment>
<comment type="cofactor">
    <cofactor evidence="1">
        <name>FMN</name>
        <dbReference type="ChEBI" id="CHEBI:58210"/>
    </cofactor>
</comment>
<comment type="pathway">
    <text evidence="1">Polyol metabolism; glycerol degradation via glycerol kinase pathway; glycerone phosphate from sn-glycerol 3-phosphate (anaerobic route): step 1/1.</text>
</comment>
<comment type="subunit">
    <text evidence="1">Composed of a catalytic GlpA/B dimer and of membrane bound GlpC.</text>
</comment>
<comment type="similarity">
    <text evidence="1">Belongs to the anaerobic G-3-P dehydrogenase subunit B family.</text>
</comment>
<organism>
    <name type="scientific">Salmonella choleraesuis (strain SC-B67)</name>
    <dbReference type="NCBI Taxonomy" id="321314"/>
    <lineage>
        <taxon>Bacteria</taxon>
        <taxon>Pseudomonadati</taxon>
        <taxon>Pseudomonadota</taxon>
        <taxon>Gammaproteobacteria</taxon>
        <taxon>Enterobacterales</taxon>
        <taxon>Enterobacteriaceae</taxon>
        <taxon>Salmonella</taxon>
    </lineage>
</organism>
<dbReference type="EC" id="1.1.5.3" evidence="1"/>
<dbReference type="EMBL" id="AE017220">
    <property type="protein sequence ID" value="AAX66194.1"/>
    <property type="molecule type" value="Genomic_DNA"/>
</dbReference>
<dbReference type="RefSeq" id="WP_000667145.1">
    <property type="nucleotide sequence ID" value="NC_006905.1"/>
</dbReference>
<dbReference type="KEGG" id="sec:SCH_2288"/>
<dbReference type="HOGENOM" id="CLU_047793_0_0_6"/>
<dbReference type="UniPathway" id="UPA00618">
    <property type="reaction ID" value="UER00673"/>
</dbReference>
<dbReference type="Proteomes" id="UP000000538">
    <property type="component" value="Chromosome"/>
</dbReference>
<dbReference type="GO" id="GO:0009331">
    <property type="term" value="C:glycerol-3-phosphate dehydrogenase (FAD) complex"/>
    <property type="evidence" value="ECO:0007669"/>
    <property type="project" value="InterPro"/>
</dbReference>
<dbReference type="GO" id="GO:0004368">
    <property type="term" value="F:glycerol-3-phosphate dehydrogenase (quinone) activity"/>
    <property type="evidence" value="ECO:0007669"/>
    <property type="project" value="UniProtKB-UniRule"/>
</dbReference>
<dbReference type="GO" id="GO:0019563">
    <property type="term" value="P:glycerol catabolic process"/>
    <property type="evidence" value="ECO:0007669"/>
    <property type="project" value="UniProtKB-UniRule"/>
</dbReference>
<dbReference type="FunFam" id="3.50.50.60:FF:000125">
    <property type="entry name" value="Anaerobic glycerol-3-phosphate dehydrogenase subunit B"/>
    <property type="match status" value="1"/>
</dbReference>
<dbReference type="Gene3D" id="3.50.50.60">
    <property type="entry name" value="FAD/NAD(P)-binding domain"/>
    <property type="match status" value="1"/>
</dbReference>
<dbReference type="HAMAP" id="MF_00753">
    <property type="entry name" value="Glycerol3P_GlpB"/>
    <property type="match status" value="1"/>
</dbReference>
<dbReference type="InterPro" id="IPR003953">
    <property type="entry name" value="FAD-dep_OxRdtase_2_FAD-bd"/>
</dbReference>
<dbReference type="InterPro" id="IPR036188">
    <property type="entry name" value="FAD/NAD-bd_sf"/>
</dbReference>
<dbReference type="InterPro" id="IPR009158">
    <property type="entry name" value="G3P_DH_GlpB_su"/>
</dbReference>
<dbReference type="NCBIfam" id="TIGR03378">
    <property type="entry name" value="glycerol3P_GlpB"/>
    <property type="match status" value="1"/>
</dbReference>
<dbReference type="NCBIfam" id="NF003718">
    <property type="entry name" value="PRK05329.1-1"/>
    <property type="match status" value="1"/>
</dbReference>
<dbReference type="NCBIfam" id="NF003719">
    <property type="entry name" value="PRK05329.1-2"/>
    <property type="match status" value="1"/>
</dbReference>
<dbReference type="NCBIfam" id="NF003720">
    <property type="entry name" value="PRK05329.1-3"/>
    <property type="match status" value="1"/>
</dbReference>
<dbReference type="Pfam" id="PF00890">
    <property type="entry name" value="FAD_binding_2"/>
    <property type="match status" value="1"/>
</dbReference>
<dbReference type="PIRSF" id="PIRSF000141">
    <property type="entry name" value="Anaerobic_G3P_dh"/>
    <property type="match status" value="1"/>
</dbReference>
<dbReference type="SUPFAM" id="SSF51905">
    <property type="entry name" value="FAD/NAD(P)-binding domain"/>
    <property type="match status" value="1"/>
</dbReference>
<evidence type="ECO:0000255" key="1">
    <source>
        <dbReference type="HAMAP-Rule" id="MF_00753"/>
    </source>
</evidence>
<keyword id="KW-0285">Flavoprotein</keyword>
<keyword id="KW-0288">FMN</keyword>
<keyword id="KW-0560">Oxidoreductase</keyword>
<proteinExistence type="inferred from homology"/>
<protein>
    <recommendedName>
        <fullName evidence="1">Anaerobic glycerol-3-phosphate dehydrogenase subunit B</fullName>
        <shortName evidence="1">Anaerobic G-3-P dehydrogenase subunit B</shortName>
        <shortName evidence="1">Anaerobic G3Pdhase B</shortName>
        <ecNumber evidence="1">1.1.5.3</ecNumber>
    </recommendedName>
</protein>
<gene>
    <name evidence="1" type="primary">glpB</name>
    <name type="ordered locus">SCH_2288</name>
</gene>
<reference key="1">
    <citation type="journal article" date="2005" name="Nucleic Acids Res.">
        <title>The genome sequence of Salmonella enterica serovar Choleraesuis, a highly invasive and resistant zoonotic pathogen.</title>
        <authorList>
            <person name="Chiu C.-H."/>
            <person name="Tang P."/>
            <person name="Chu C."/>
            <person name="Hu S."/>
            <person name="Bao Q."/>
            <person name="Yu J."/>
            <person name="Chou Y.-Y."/>
            <person name="Wang H.-S."/>
            <person name="Lee Y.-S."/>
        </authorList>
    </citation>
    <scope>NUCLEOTIDE SEQUENCE [LARGE SCALE GENOMIC DNA]</scope>
    <source>
        <strain>SC-B67</strain>
    </source>
</reference>
<name>GLPB_SALCH</name>
<accession>Q57M68</accession>